<proteinExistence type="inferred from homology"/>
<gene>
    <name evidence="1" type="primary">trpC</name>
    <name type="ordered locus">SynWH7803_1743</name>
</gene>
<comment type="catalytic activity">
    <reaction evidence="1">
        <text>1-(2-carboxyphenylamino)-1-deoxy-D-ribulose 5-phosphate + H(+) = (1S,2R)-1-C-(indol-3-yl)glycerol 3-phosphate + CO2 + H2O</text>
        <dbReference type="Rhea" id="RHEA:23476"/>
        <dbReference type="ChEBI" id="CHEBI:15377"/>
        <dbReference type="ChEBI" id="CHEBI:15378"/>
        <dbReference type="ChEBI" id="CHEBI:16526"/>
        <dbReference type="ChEBI" id="CHEBI:58613"/>
        <dbReference type="ChEBI" id="CHEBI:58866"/>
        <dbReference type="EC" id="4.1.1.48"/>
    </reaction>
</comment>
<comment type="pathway">
    <text evidence="1">Amino-acid biosynthesis; L-tryptophan biosynthesis; L-tryptophan from chorismate: step 4/5.</text>
</comment>
<comment type="similarity">
    <text evidence="1">Belongs to the TrpC family.</text>
</comment>
<evidence type="ECO:0000255" key="1">
    <source>
        <dbReference type="HAMAP-Rule" id="MF_00134"/>
    </source>
</evidence>
<name>TRPC_SYNPW</name>
<sequence>MEIRRRPPNPKVQVAHLEYAIPHQDGEPRNILEKIVWEKDREIETARQRMPLVQLKARVAELPPALDFLGALRQAPVAPAVIAEVKKASPSKGVIREDFDPVAIAKAYAAGGASCLSVLTDRTFFQGGFDVLVAVREAVDLPLLCKDFILSPHQLYQARAAGADAALLIAAILTDQDLAYLQKVAATLGLTVLVEVHDAAEMERILTLGGFPLIGINNRDLTSFETDLATTEALTQQFADRLRAQDAFLVSESGLFARADLNRVQRSGAGAVLVGEALMRQDNVEQGLRDLIAP</sequence>
<keyword id="KW-0028">Amino-acid biosynthesis</keyword>
<keyword id="KW-0057">Aromatic amino acid biosynthesis</keyword>
<keyword id="KW-0210">Decarboxylase</keyword>
<keyword id="KW-0456">Lyase</keyword>
<keyword id="KW-1185">Reference proteome</keyword>
<keyword id="KW-0822">Tryptophan biosynthesis</keyword>
<accession>A5GMK4</accession>
<feature type="chain" id="PRO_1000018558" description="Indole-3-glycerol phosphate synthase">
    <location>
        <begin position="1"/>
        <end position="294"/>
    </location>
</feature>
<protein>
    <recommendedName>
        <fullName evidence="1">Indole-3-glycerol phosphate synthase</fullName>
        <shortName evidence="1">IGPS</shortName>
        <ecNumber evidence="1">4.1.1.48</ecNumber>
    </recommendedName>
</protein>
<organism>
    <name type="scientific">Synechococcus sp. (strain WH7803)</name>
    <dbReference type="NCBI Taxonomy" id="32051"/>
    <lineage>
        <taxon>Bacteria</taxon>
        <taxon>Bacillati</taxon>
        <taxon>Cyanobacteriota</taxon>
        <taxon>Cyanophyceae</taxon>
        <taxon>Synechococcales</taxon>
        <taxon>Synechococcaceae</taxon>
        <taxon>Synechococcus</taxon>
    </lineage>
</organism>
<dbReference type="EC" id="4.1.1.48" evidence="1"/>
<dbReference type="EMBL" id="CT971583">
    <property type="protein sequence ID" value="CAK24169.1"/>
    <property type="molecule type" value="Genomic_DNA"/>
</dbReference>
<dbReference type="SMR" id="A5GMK4"/>
<dbReference type="STRING" id="32051.SynWH7803_1743"/>
<dbReference type="KEGG" id="syx:SynWH7803_1743"/>
<dbReference type="eggNOG" id="COG0134">
    <property type="taxonomic scope" value="Bacteria"/>
</dbReference>
<dbReference type="HOGENOM" id="CLU_034247_2_0_3"/>
<dbReference type="OrthoDB" id="9804217at2"/>
<dbReference type="UniPathway" id="UPA00035">
    <property type="reaction ID" value="UER00043"/>
</dbReference>
<dbReference type="Proteomes" id="UP000001566">
    <property type="component" value="Chromosome"/>
</dbReference>
<dbReference type="GO" id="GO:0004425">
    <property type="term" value="F:indole-3-glycerol-phosphate synthase activity"/>
    <property type="evidence" value="ECO:0007669"/>
    <property type="project" value="UniProtKB-UniRule"/>
</dbReference>
<dbReference type="GO" id="GO:0004640">
    <property type="term" value="F:phosphoribosylanthranilate isomerase activity"/>
    <property type="evidence" value="ECO:0007669"/>
    <property type="project" value="TreeGrafter"/>
</dbReference>
<dbReference type="GO" id="GO:0000162">
    <property type="term" value="P:L-tryptophan biosynthetic process"/>
    <property type="evidence" value="ECO:0007669"/>
    <property type="project" value="UniProtKB-UniRule"/>
</dbReference>
<dbReference type="CDD" id="cd00331">
    <property type="entry name" value="IGPS"/>
    <property type="match status" value="1"/>
</dbReference>
<dbReference type="FunFam" id="3.20.20.70:FF:000024">
    <property type="entry name" value="Indole-3-glycerol phosphate synthase"/>
    <property type="match status" value="1"/>
</dbReference>
<dbReference type="Gene3D" id="3.20.20.70">
    <property type="entry name" value="Aldolase class I"/>
    <property type="match status" value="1"/>
</dbReference>
<dbReference type="HAMAP" id="MF_00134_B">
    <property type="entry name" value="IGPS_B"/>
    <property type="match status" value="1"/>
</dbReference>
<dbReference type="InterPro" id="IPR013785">
    <property type="entry name" value="Aldolase_TIM"/>
</dbReference>
<dbReference type="InterPro" id="IPR045186">
    <property type="entry name" value="Indole-3-glycerol_P_synth"/>
</dbReference>
<dbReference type="InterPro" id="IPR013798">
    <property type="entry name" value="Indole-3-glycerol_P_synth_dom"/>
</dbReference>
<dbReference type="InterPro" id="IPR001468">
    <property type="entry name" value="Indole-3-GlycerolPSynthase_CS"/>
</dbReference>
<dbReference type="InterPro" id="IPR011060">
    <property type="entry name" value="RibuloseP-bd_barrel"/>
</dbReference>
<dbReference type="NCBIfam" id="NF001372">
    <property type="entry name" value="PRK00278.1-4"/>
    <property type="match status" value="1"/>
</dbReference>
<dbReference type="NCBIfam" id="NF001377">
    <property type="entry name" value="PRK00278.2-4"/>
    <property type="match status" value="1"/>
</dbReference>
<dbReference type="PANTHER" id="PTHR22854:SF2">
    <property type="entry name" value="INDOLE-3-GLYCEROL-PHOSPHATE SYNTHASE"/>
    <property type="match status" value="1"/>
</dbReference>
<dbReference type="PANTHER" id="PTHR22854">
    <property type="entry name" value="TRYPTOPHAN BIOSYNTHESIS PROTEIN"/>
    <property type="match status" value="1"/>
</dbReference>
<dbReference type="Pfam" id="PF00218">
    <property type="entry name" value="IGPS"/>
    <property type="match status" value="1"/>
</dbReference>
<dbReference type="SUPFAM" id="SSF51366">
    <property type="entry name" value="Ribulose-phoshate binding barrel"/>
    <property type="match status" value="1"/>
</dbReference>
<dbReference type="PROSITE" id="PS00614">
    <property type="entry name" value="IGPS"/>
    <property type="match status" value="1"/>
</dbReference>
<reference key="1">
    <citation type="submission" date="2006-05" db="EMBL/GenBank/DDBJ databases">
        <authorList>
            <consortium name="Genoscope"/>
        </authorList>
    </citation>
    <scope>NUCLEOTIDE SEQUENCE [LARGE SCALE GENOMIC DNA]</scope>
    <source>
        <strain>WH7803</strain>
    </source>
</reference>